<organism>
    <name type="scientific">Homo sapiens</name>
    <name type="common">Human</name>
    <dbReference type="NCBI Taxonomy" id="9606"/>
    <lineage>
        <taxon>Eukaryota</taxon>
        <taxon>Metazoa</taxon>
        <taxon>Chordata</taxon>
        <taxon>Craniata</taxon>
        <taxon>Vertebrata</taxon>
        <taxon>Euteleostomi</taxon>
        <taxon>Mammalia</taxon>
        <taxon>Eutheria</taxon>
        <taxon>Euarchontoglires</taxon>
        <taxon>Primates</taxon>
        <taxon>Haplorrhini</taxon>
        <taxon>Catarrhini</taxon>
        <taxon>Hominidae</taxon>
        <taxon>Homo</taxon>
    </lineage>
</organism>
<keyword id="KW-0002">3D-structure</keyword>
<keyword id="KW-0050">Antiport</keyword>
<keyword id="KW-1003">Cell membrane</keyword>
<keyword id="KW-0963">Cytoplasm</keyword>
<keyword id="KW-0968">Cytoplasmic vesicle</keyword>
<keyword id="KW-0256">Endoplasmic reticulum</keyword>
<keyword id="KW-0325">Glycoprotein</keyword>
<keyword id="KW-0333">Golgi apparatus</keyword>
<keyword id="KW-0406">Ion transport</keyword>
<keyword id="KW-0472">Membrane</keyword>
<keyword id="KW-0479">Metal-binding</keyword>
<keyword id="KW-0539">Nucleus</keyword>
<keyword id="KW-0597">Phosphoprotein</keyword>
<keyword id="KW-1267">Proteomics identification</keyword>
<keyword id="KW-1185">Reference proteome</keyword>
<keyword id="KW-0677">Repeat</keyword>
<keyword id="KW-0812">Transmembrane</keyword>
<keyword id="KW-1133">Transmembrane helix</keyword>
<keyword id="KW-0813">Transport</keyword>
<keyword id="KW-0862">Zinc</keyword>
<keyword id="KW-0864">Zinc transport</keyword>
<gene>
    <name evidence="13" type="primary">SLC30A1</name>
    <name evidence="10" type="synonym">ZNT1</name>
</gene>
<reference key="1">
    <citation type="submission" date="2000-11" db="EMBL/GenBank/DDBJ databases">
        <title>Cloning and characterization of human zinc transporter 1 (ZNT1).</title>
        <authorList>
            <person name="Nanji M.S."/>
            <person name="Coronado V.A."/>
            <person name="Cox D.W."/>
        </authorList>
    </citation>
    <scope>NUCLEOTIDE SEQUENCE [GENOMIC DNA]</scope>
</reference>
<reference key="2">
    <citation type="submission" date="2008-07" db="EMBL/GenBank/DDBJ databases">
        <title>Human Protein Factory: an infrastructure to convert the human transcriptome into the in vitro-expressed human proteome of versatile utility.</title>
        <authorList>
            <person name="Goshima N."/>
            <person name="Kawamura Y."/>
            <person name="Fukumoto A."/>
            <person name="Miura A."/>
            <person name="Honma R."/>
            <person name="Satoh R."/>
            <person name="Wakamatsu A."/>
            <person name="Yamamoto J."/>
            <person name="Kimura K."/>
            <person name="Nishikawa T."/>
            <person name="Andoh T."/>
            <person name="Iida Y."/>
            <person name="Ishikawa K."/>
            <person name="Ito E."/>
            <person name="Kagawa N."/>
            <person name="Kaminaga C."/>
            <person name="Kanehori K."/>
            <person name="Kawakami B."/>
            <person name="Kenmochi K."/>
            <person name="Kimura R."/>
            <person name="Kobayashi M."/>
            <person name="Kuroita T."/>
            <person name="Kuwayama H."/>
            <person name="Maruyama Y."/>
            <person name="Matsuo K."/>
            <person name="Minami K."/>
            <person name="Mitsubori M."/>
            <person name="Mori M."/>
            <person name="Morishita R."/>
            <person name="Murase A."/>
            <person name="Nishikawa A."/>
            <person name="Nishikawa S."/>
            <person name="Okamoto T."/>
            <person name="Sakagami N."/>
            <person name="Sakamoto Y."/>
            <person name="Sasaki Y."/>
            <person name="Seki T."/>
            <person name="Sono S."/>
            <person name="Sugiyama A."/>
            <person name="Sumiya T."/>
            <person name="Takayama T."/>
            <person name="Takayama Y."/>
            <person name="Takeda H."/>
            <person name="Togashi T."/>
            <person name="Yahata K."/>
            <person name="Yamada H."/>
            <person name="Yanagisawa Y."/>
            <person name="Endo Y."/>
            <person name="Imamoto F."/>
            <person name="Kisu Y."/>
            <person name="Tanaka S."/>
            <person name="Isogai T."/>
            <person name="Imai J."/>
            <person name="Watanabe S."/>
            <person name="Nomura N."/>
        </authorList>
    </citation>
    <scope>NUCLEOTIDE SEQUENCE [MRNA]</scope>
</reference>
<reference key="3">
    <citation type="submission" date="2005-09" db="EMBL/GenBank/DDBJ databases">
        <authorList>
            <person name="Mural R.J."/>
            <person name="Istrail S."/>
            <person name="Sutton G.G."/>
            <person name="Florea L."/>
            <person name="Halpern A.L."/>
            <person name="Mobarry C.M."/>
            <person name="Lippert R."/>
            <person name="Walenz B."/>
            <person name="Shatkay H."/>
            <person name="Dew I."/>
            <person name="Miller J.R."/>
            <person name="Flanigan M.J."/>
            <person name="Edwards N.J."/>
            <person name="Bolanos R."/>
            <person name="Fasulo D."/>
            <person name="Halldorsson B.V."/>
            <person name="Hannenhalli S."/>
            <person name="Turner R."/>
            <person name="Yooseph S."/>
            <person name="Lu F."/>
            <person name="Nusskern D.R."/>
            <person name="Shue B.C."/>
            <person name="Zheng X.H."/>
            <person name="Zhong F."/>
            <person name="Delcher A.L."/>
            <person name="Huson D.H."/>
            <person name="Kravitz S.A."/>
            <person name="Mouchard L."/>
            <person name="Reinert K."/>
            <person name="Remington K.A."/>
            <person name="Clark A.G."/>
            <person name="Waterman M.S."/>
            <person name="Eichler E.E."/>
            <person name="Adams M.D."/>
            <person name="Hunkapiller M.W."/>
            <person name="Myers E.W."/>
            <person name="Venter J.C."/>
        </authorList>
    </citation>
    <scope>NUCLEOTIDE SEQUENCE [LARGE SCALE GENOMIC DNA]</scope>
</reference>
<reference key="4">
    <citation type="journal article" date="2004" name="Genome Res.">
        <title>The status, quality, and expansion of the NIH full-length cDNA project: the Mammalian Gene Collection (MGC).</title>
        <authorList>
            <consortium name="The MGC Project Team"/>
        </authorList>
    </citation>
    <scope>NUCLEOTIDE SEQUENCE [LARGE SCALE MRNA]</scope>
</reference>
<reference key="5">
    <citation type="submission" date="1998-02" db="EMBL/GenBank/DDBJ databases">
        <title>Assignment of the human zinc transporter gene 1 (ZnT1) to chromosomes 1.</title>
        <authorList>
            <person name="Inoue H."/>
            <person name="Oka Y."/>
        </authorList>
    </citation>
    <scope>NUCLEOTIDE SEQUENCE [GENOMIC DNA] OF 411-507</scope>
</reference>
<reference key="6">
    <citation type="journal article" date="2006" name="Cell">
        <title>Global, in vivo, and site-specific phosphorylation dynamics in signaling networks.</title>
        <authorList>
            <person name="Olsen J.V."/>
            <person name="Blagoev B."/>
            <person name="Gnad F."/>
            <person name="Macek B."/>
            <person name="Kumar C."/>
            <person name="Mortensen P."/>
            <person name="Mann M."/>
        </authorList>
    </citation>
    <scope>IDENTIFICATION BY MASS SPECTROMETRY [LARGE SCALE ANALYSIS]</scope>
    <source>
        <tissue>Cervix carcinoma</tissue>
    </source>
</reference>
<reference key="7">
    <citation type="journal article" date="2008" name="J. Exp. Med.">
        <title>Regulation of cellular zinc balance as a potential mechanism of EVER-mediated protection against pathogenesis by cutaneous oncogenic human papillomaviruses.</title>
        <authorList>
            <person name="Lazarczyk M."/>
            <person name="Pons C."/>
            <person name="Mendoza J.A."/>
            <person name="Cassonnet P."/>
            <person name="Jacob Y."/>
            <person name="Favre M."/>
        </authorList>
    </citation>
    <scope>FUNCTION</scope>
    <scope>INTERACTION WITH TMC6 AND TMC8</scope>
    <scope>INTERACTION WITH HPV (MICROBIAL INFECTION)</scope>
    <scope>SUBCELLULAR LOCATION</scope>
</reference>
<reference key="8">
    <citation type="journal article" date="2008" name="Proc. Natl. Acad. Sci. U.S.A.">
        <title>A quantitative atlas of mitotic phosphorylation.</title>
        <authorList>
            <person name="Dephoure N."/>
            <person name="Zhou C."/>
            <person name="Villen J."/>
            <person name="Beausoleil S.A."/>
            <person name="Bakalarski C.E."/>
            <person name="Elledge S.J."/>
            <person name="Gygi S.P."/>
        </authorList>
    </citation>
    <scope>PHOSPHORYLATION [LARGE SCALE ANALYSIS] AT SER-506</scope>
    <scope>IDENTIFICATION BY MASS SPECTROMETRY [LARGE SCALE ANALYSIS]</scope>
    <source>
        <tissue>Cervix carcinoma</tissue>
    </source>
</reference>
<reference key="9">
    <citation type="journal article" date="2011" name="Sci. Signal.">
        <title>System-wide temporal characterization of the proteome and phosphoproteome of human embryonic stem cell differentiation.</title>
        <authorList>
            <person name="Rigbolt K.T."/>
            <person name="Prokhorova T.A."/>
            <person name="Akimov V."/>
            <person name="Henningsen J."/>
            <person name="Johansen P.T."/>
            <person name="Kratchmarova I."/>
            <person name="Kassem M."/>
            <person name="Mann M."/>
            <person name="Olsen J.V."/>
            <person name="Blagoev B."/>
        </authorList>
    </citation>
    <scope>IDENTIFICATION BY MASS SPECTROMETRY [LARGE SCALE ANALYSIS]</scope>
</reference>
<reference key="10">
    <citation type="journal article" date="2013" name="J. Proteome Res.">
        <title>Toward a comprehensive characterization of a human cancer cell phosphoproteome.</title>
        <authorList>
            <person name="Zhou H."/>
            <person name="Di Palma S."/>
            <person name="Preisinger C."/>
            <person name="Peng M."/>
            <person name="Polat A.N."/>
            <person name="Heck A.J."/>
            <person name="Mohammed S."/>
        </authorList>
    </citation>
    <scope>IDENTIFICATION BY MASS SPECTROMETRY [LARGE SCALE ANALYSIS]</scope>
    <source>
        <tissue>Cervix carcinoma</tissue>
        <tissue>Erythroleukemia</tissue>
    </source>
</reference>
<reference key="11">
    <citation type="journal article" date="2019" name="J. Biol. Chem.">
        <title>Zinc transporter 1 (ZNT1) expression on the cell surface is elaborately controlled by cellular zinc levels.</title>
        <authorList>
            <person name="Nishito Y."/>
            <person name="Kambe T."/>
        </authorList>
    </citation>
    <scope>FUNCTION</scope>
    <scope>SUBCELLULAR LOCATION</scope>
    <scope>INDUCTION BY ZINC</scope>
    <scope>GLYCOSYLATION AT ASN-299</scope>
    <scope>TOPOLOGY</scope>
    <scope>MUTAGENESIS OF ASN-299</scope>
</reference>
<reference key="12">
    <citation type="journal article" date="2021" name="J. Leukoc. Biol.">
        <title>Frontline Science: LPS-inducible SLC30A1 drives human macrophage-mediated zinc toxicity against intracellular Escherichia coli.</title>
        <authorList>
            <person name="Stocks C.J."/>
            <person name="von Pein J.B."/>
            <person name="Curson J.E.B."/>
            <person name="Rae J."/>
            <person name="Phan M.D."/>
            <person name="Foo D."/>
            <person name="Bokil N.J."/>
            <person name="Kambe T."/>
            <person name="Peters K.M."/>
            <person name="Parton R.G."/>
            <person name="Schembri M.A."/>
            <person name="Kapetanovic R."/>
            <person name="Sweet M.J."/>
        </authorList>
    </citation>
    <scope>FUNCTION</scope>
    <scope>SUBCELLULAR LOCATION</scope>
    <scope>INDUCTION BY LPS</scope>
</reference>
<reference key="13">
    <citation type="journal article" date="2022" name="Biochem. Biophys. Rep.">
        <title>Transmembrane 163 (TMEM163) protein interacts with specific mammalian SLC30 zinc efflux transporter family members.</title>
        <authorList>
            <person name="Escobar A."/>
            <person name="Styrpejko D.J."/>
            <person name="Ali S."/>
            <person name="Cuajungco M.P."/>
        </authorList>
    </citation>
    <scope>INTERACTION WITH TMEM163</scope>
</reference>
<feature type="chain" id="PRO_0000206090" description="Proton-coupled zinc antiporter SLC30A1">
    <location>
        <begin position="1"/>
        <end position="507"/>
    </location>
</feature>
<feature type="topological domain" description="Cytoplasmic" evidence="12">
    <location>
        <begin position="1"/>
        <end position="10"/>
    </location>
</feature>
<feature type="transmembrane region" description="Helical" evidence="3">
    <location>
        <begin position="11"/>
        <end position="31"/>
    </location>
</feature>
<feature type="topological domain" description="Extracellular" evidence="12">
    <location>
        <begin position="32"/>
        <end position="35"/>
    </location>
</feature>
<feature type="transmembrane region" description="Helical" evidence="3">
    <location>
        <begin position="36"/>
        <end position="56"/>
    </location>
</feature>
<feature type="topological domain" description="Cytoplasmic" evidence="12">
    <location>
        <begin position="57"/>
        <end position="78"/>
    </location>
</feature>
<feature type="transmembrane region" description="Helical" evidence="3">
    <location>
        <begin position="79"/>
        <end position="99"/>
    </location>
</feature>
<feature type="topological domain" description="Extracellular" evidence="12">
    <location>
        <begin position="100"/>
        <end position="113"/>
    </location>
</feature>
<feature type="transmembrane region" description="Helical" evidence="3">
    <location>
        <begin position="114"/>
        <end position="134"/>
    </location>
</feature>
<feature type="topological domain" description="Cytoplasmic" evidence="12">
    <location>
        <begin position="135"/>
        <end position="248"/>
    </location>
</feature>
<feature type="transmembrane region" description="Helical" evidence="3">
    <location>
        <begin position="249"/>
        <end position="269"/>
    </location>
</feature>
<feature type="topological domain" description="Extracellular" evidence="12">
    <location>
        <begin position="270"/>
        <end position="308"/>
    </location>
</feature>
<feature type="transmembrane region" description="Helical" evidence="3">
    <location>
        <begin position="309"/>
        <end position="329"/>
    </location>
</feature>
<feature type="topological domain" description="Cytoplasmic" evidence="12">
    <location>
        <begin position="330"/>
        <end position="507"/>
    </location>
</feature>
<feature type="region of interest" description="Disordered" evidence="4">
    <location>
        <begin position="142"/>
        <end position="217"/>
    </location>
</feature>
<feature type="region of interest" description="6 X 2 AA approximate repeats of H-G">
    <location>
        <begin position="146"/>
        <end position="158"/>
    </location>
</feature>
<feature type="compositionally biased region" description="Basic residues" evidence="4">
    <location>
        <begin position="147"/>
        <end position="167"/>
    </location>
</feature>
<feature type="compositionally biased region" description="Polar residues" evidence="4">
    <location>
        <begin position="189"/>
        <end position="201"/>
    </location>
</feature>
<feature type="binding site" evidence="2">
    <location>
        <position position="43"/>
    </location>
    <ligand>
        <name>Zn(2+)</name>
        <dbReference type="ChEBI" id="CHEBI:29105"/>
        <note>transported zinc</note>
    </ligand>
</feature>
<feature type="binding site" evidence="1">
    <location>
        <position position="47"/>
    </location>
    <ligand>
        <name>Zn(2+)</name>
        <dbReference type="ChEBI" id="CHEBI:29105"/>
        <note>transported zinc</note>
    </ligand>
</feature>
<feature type="binding site" evidence="1">
    <location>
        <position position="251"/>
    </location>
    <ligand>
        <name>Zn(2+)</name>
        <dbReference type="ChEBI" id="CHEBI:29105"/>
        <note>transported zinc</note>
    </ligand>
</feature>
<feature type="binding site" evidence="2">
    <location>
        <position position="255"/>
    </location>
    <ligand>
        <name>Zn(2+)</name>
        <dbReference type="ChEBI" id="CHEBI:29105"/>
        <note>transported zinc</note>
    </ligand>
</feature>
<feature type="modified residue" description="Phosphoserine" evidence="14">
    <location>
        <position position="506"/>
    </location>
</feature>
<feature type="glycosylation site" description="N-linked (GlcNAc...) asparagine" evidence="6">
    <location>
        <position position="299"/>
    </location>
</feature>
<feature type="mutagenesis site" description="Loss of N-glycosylation. No effect on localization to the plasma membrane. Increased stability at the plasma membrane. No effect on resistance to zinc-induced cytotoxicity." evidence="6">
    <original>N</original>
    <variation>A</variation>
    <location>
        <position position="299"/>
    </location>
</feature>
<feature type="sequence conflict" description="In Ref. 1; AAG53405." evidence="11" ref="1">
    <original>A</original>
    <variation>V</variation>
    <location>
        <position position="386"/>
    </location>
</feature>
<feature type="helix" evidence="17">
    <location>
        <begin position="7"/>
        <end position="32"/>
    </location>
</feature>
<feature type="helix" evidence="17">
    <location>
        <begin position="35"/>
        <end position="41"/>
    </location>
</feature>
<feature type="helix" evidence="17">
    <location>
        <begin position="42"/>
        <end position="44"/>
    </location>
</feature>
<feature type="helix" evidence="17">
    <location>
        <begin position="45"/>
        <end position="60"/>
    </location>
</feature>
<feature type="helix" evidence="17">
    <location>
        <begin position="77"/>
        <end position="105"/>
    </location>
</feature>
<feature type="helix" evidence="17">
    <location>
        <begin position="113"/>
        <end position="134"/>
    </location>
</feature>
<feature type="helix" evidence="17">
    <location>
        <begin position="241"/>
        <end position="271"/>
    </location>
</feature>
<feature type="strand" evidence="15">
    <location>
        <begin position="278"/>
        <end position="281"/>
    </location>
</feature>
<feature type="strand" evidence="18">
    <location>
        <begin position="285"/>
        <end position="288"/>
    </location>
</feature>
<feature type="helix" evidence="16">
    <location>
        <begin position="290"/>
        <end position="292"/>
    </location>
</feature>
<feature type="turn" evidence="15">
    <location>
        <begin position="293"/>
        <end position="296"/>
    </location>
</feature>
<feature type="helix" evidence="17">
    <location>
        <begin position="310"/>
        <end position="313"/>
    </location>
</feature>
<feature type="helix" evidence="17">
    <location>
        <begin position="316"/>
        <end position="343"/>
    </location>
</feature>
<feature type="helix" evidence="17">
    <location>
        <begin position="353"/>
        <end position="361"/>
    </location>
</feature>
<feature type="strand" evidence="17">
    <location>
        <begin position="363"/>
        <end position="365"/>
    </location>
</feature>
<feature type="strand" evidence="17">
    <location>
        <begin position="368"/>
        <end position="378"/>
    </location>
</feature>
<feature type="strand" evidence="17">
    <location>
        <begin position="381"/>
        <end position="389"/>
    </location>
</feature>
<feature type="helix" evidence="17">
    <location>
        <begin position="393"/>
        <end position="395"/>
    </location>
</feature>
<feature type="helix" evidence="17">
    <location>
        <begin position="396"/>
        <end position="409"/>
    </location>
</feature>
<feature type="strand" evidence="17">
    <location>
        <begin position="414"/>
        <end position="420"/>
    </location>
</feature>
<comment type="function">
    <text evidence="2 5 6 7">Zinc ion:proton antiporter that could function at the plasma membrane mediating zinc efflux from cells against its electrochemical gradient protecting them from intracellular zinc accumulation and toxicity (PubMed:31471319). Alternatively, could prevent the transport to the plasma membrane of CACNB2, the L-type calcium channels regulatory subunit, through a yet to be defined mechanism. By modulating the expression of these channels at the plasma membrane, could prevent calcium and zinc influx into cells. By the same mechanism, could also prevent L-type calcium channels-mediated heavy metal influx into cells (By similarity). In some cells, could also function as a zinc ion:proton antiporter mediating zinc entry into the lumen of cytoplasmic vesicles. In macrophages, can increase zinc ions concentration into the lumen of cytoplasmic vesicles containing engulfed bacteria and could help inactivate them (PubMed:32441444). Forms a complex with TMC6/EVER1 and TMC8/EVER2 at the ER membrane of keratynocytes which facilitates zinc uptake into the ER (PubMed:18158319). Down-regulates the activity of transcription factors induced by zinc and cytokines (PubMed:18158319).</text>
</comment>
<comment type="catalytic activity">
    <reaction evidence="2">
        <text>Zn(2+)(in) + 2 H(+)(out) = Zn(2+)(out) + 2 H(+)(in)</text>
        <dbReference type="Rhea" id="RHEA:72627"/>
        <dbReference type="ChEBI" id="CHEBI:15378"/>
        <dbReference type="ChEBI" id="CHEBI:29105"/>
    </reaction>
</comment>
<comment type="subunit">
    <text evidence="2 5 8">Homodimer. Interacts with TMEM163 (PubMed:36204728). Interacts and forms a complex with TMC6 and TMC8; the interaction regulates zinc transport into the ER (PubMed:18158319).</text>
</comment>
<comment type="subunit">
    <text evidence="5">(Microbial infection) Interacts with human papillomavirus 16/HPV16 protein E5; the interaction alleviates SLC30A1-mediated transcription factors inhibition.</text>
</comment>
<comment type="interaction">
    <interactant intactId="EBI-10982148">
        <id>Q9Y6M5</id>
    </interactant>
    <interactant intactId="EBI-8644112">
        <id>Q9BRI3</id>
        <label>SLC30A2</label>
    </interactant>
    <organismsDiffer>false</organismsDiffer>
    <experiments>4</experiments>
</comment>
<comment type="interaction">
    <interactant intactId="EBI-10982148">
        <id>Q9Y6M5</id>
    </interactant>
    <interactant intactId="EBI-25600012">
        <id>Q8TC26</id>
        <label>TMEM163</label>
    </interactant>
    <organismsDiffer>false</organismsDiffer>
    <experiments>3</experiments>
</comment>
<comment type="subcellular location">
    <subcellularLocation>
        <location evidence="6 7">Cell membrane</location>
        <topology evidence="3">Multi-pass membrane protein</topology>
    </subcellularLocation>
    <subcellularLocation>
        <location evidence="6">Basolateral cell membrane</location>
        <topology evidence="3">Multi-pass membrane protein</topology>
    </subcellularLocation>
    <subcellularLocation>
        <location evidence="7">Cytoplasmic vesicle membrane</location>
        <topology evidence="3">Multi-pass membrane protein</topology>
    </subcellularLocation>
    <subcellularLocation>
        <location evidence="5">Cytoplasm</location>
    </subcellularLocation>
    <subcellularLocation>
        <location evidence="5">Endoplasmic reticulum membrane</location>
        <topology evidence="3">Multi-pass membrane protein</topology>
    </subcellularLocation>
    <subcellularLocation>
        <location evidence="5">Golgi apparatus membrane</location>
        <topology evidence="3">Multi-pass membrane protein</topology>
    </subcellularLocation>
    <subcellularLocation>
        <location evidence="5">Nucleus membrane</location>
        <topology evidence="3">Multi-pass membrane protein</topology>
    </subcellularLocation>
    <text evidence="2 5 6 7">Localization to the plasma membrane is regulated by cellular zinc status. Recruitment to the plasma membrane from an internal pool is stimulated by zinc while in absence of zinc the plasma membrane pool is endocytosed and degraded (PubMed:31471319). Localizes to the basolateral surface of enterocytes (By similarity). Localizes to zinc-containing intracellular vesicles in macrophages (PubMed:32441444). Localizes in the cytoplasm and to the ER, Golgi and nucleus membranes in keratinocytes (PubMed:18158319).</text>
</comment>
<comment type="induction">
    <text evidence="6 7">Up-regulated by zinc (at protein level) (PubMed:31471319). Up-regulated in macrophages by LPS (at protein level) (PubMed:32441444).</text>
</comment>
<comment type="PTM">
    <text evidence="6">N-glycosylated at Asn-299. N-glycosylation promotes endocytosis and degradation through the proteasomal or lysosomal pathways.</text>
</comment>
<comment type="similarity">
    <text evidence="11">Belongs to the cation diffusion facilitator (CDF) transporter (TC 2.A.4) family. SLC30A subfamily.</text>
</comment>
<sequence length="507" mass="55300">MGCWGRNRGRLLCMLALTFMFMVLEVVVSRVTSSLAMLSDSFHMLSDVLALVVALVAERFARRTHATQKNTFGWIRAEVMGALVNAIFLTGLCFAILLEAIERFIEPHEMQQPLVVLGVGVAGLLVNVLGLCLFHHHSGFSQDSGHGHSHGGHGHGHGLPKGPRVKSTRPGSSDINVAPGEQGPDQEETNTLVANTSNSNGLKLDPADPENPRSGDTVEVQVNGNLVREPDHMELEEDRAGQLNMRGVFLHVLGDALGSVIVVVNALVFYFSWKGCSEGDFCVNPCFPDPCKAFVEIINSTHASVYEAGPCWVLYLDPTLCVVMVCILLYTTYPLLKESALILLQTVPKQIDIRNLIKELRNVEGVEEVHELHVWQLAGSRIIATAHIKCEDPTSYMEVAKTIKDVFHNHGIHATTIQPEFASVGSKSSVVPCELACRTQCALKQCCGTLPQAPSGKDAEKTPAVSISCLELSNNLEKKPRRTKAENIPAVVIEIKNMPNKQPESSL</sequence>
<proteinExistence type="evidence at protein level"/>
<accession>Q9Y6M5</accession>
<accession>Q0VAK9</accession>
<accession>Q9BZF6</accession>
<evidence type="ECO:0000250" key="1">
    <source>
        <dbReference type="UniProtKB" id="P69380"/>
    </source>
</evidence>
<evidence type="ECO:0000250" key="2">
    <source>
        <dbReference type="UniProtKB" id="Q62720"/>
    </source>
</evidence>
<evidence type="ECO:0000255" key="3"/>
<evidence type="ECO:0000256" key="4">
    <source>
        <dbReference type="SAM" id="MobiDB-lite"/>
    </source>
</evidence>
<evidence type="ECO:0000269" key="5">
    <source>
    </source>
</evidence>
<evidence type="ECO:0000269" key="6">
    <source>
    </source>
</evidence>
<evidence type="ECO:0000269" key="7">
    <source>
    </source>
</evidence>
<evidence type="ECO:0000269" key="8">
    <source>
    </source>
</evidence>
<evidence type="ECO:0000303" key="9">
    <source>
    </source>
</evidence>
<evidence type="ECO:0000303" key="10">
    <source ref="1"/>
</evidence>
<evidence type="ECO:0000305" key="11"/>
<evidence type="ECO:0000305" key="12">
    <source>
    </source>
</evidence>
<evidence type="ECO:0000312" key="13">
    <source>
        <dbReference type="HGNC" id="HGNC:11012"/>
    </source>
</evidence>
<evidence type="ECO:0007744" key="14">
    <source>
    </source>
</evidence>
<evidence type="ECO:0007829" key="15">
    <source>
        <dbReference type="PDB" id="8J2G"/>
    </source>
</evidence>
<evidence type="ECO:0007829" key="16">
    <source>
        <dbReference type="PDB" id="8XM6"/>
    </source>
</evidence>
<evidence type="ECO:0007829" key="17">
    <source>
        <dbReference type="PDB" id="8XMA"/>
    </source>
</evidence>
<evidence type="ECO:0007829" key="18">
    <source>
        <dbReference type="PDB" id="8ZSB"/>
    </source>
</evidence>
<dbReference type="EMBL" id="AF323590">
    <property type="protein sequence ID" value="AAG53405.1"/>
    <property type="molecule type" value="Genomic_DNA"/>
</dbReference>
<dbReference type="EMBL" id="AB451467">
    <property type="protein sequence ID" value="BAG70281.1"/>
    <property type="molecule type" value="mRNA"/>
</dbReference>
<dbReference type="EMBL" id="CH471100">
    <property type="protein sequence ID" value="EAW93412.1"/>
    <property type="molecule type" value="Genomic_DNA"/>
</dbReference>
<dbReference type="EMBL" id="BC121015">
    <property type="protein sequence ID" value="AAI21016.1"/>
    <property type="molecule type" value="mRNA"/>
</dbReference>
<dbReference type="EMBL" id="BC121016">
    <property type="protein sequence ID" value="AAI21017.1"/>
    <property type="molecule type" value="mRNA"/>
</dbReference>
<dbReference type="EMBL" id="AF048701">
    <property type="protein sequence ID" value="AAD29840.1"/>
    <property type="molecule type" value="Genomic_DNA"/>
</dbReference>
<dbReference type="CCDS" id="CCDS1499.1"/>
<dbReference type="RefSeq" id="NP_067017.2">
    <property type="nucleotide sequence ID" value="NM_021194.2"/>
</dbReference>
<dbReference type="PDB" id="8J2G">
    <property type="method" value="EM"/>
    <property type="resolution" value="3.40 A"/>
    <property type="chains" value="A/B=1-507"/>
</dbReference>
<dbReference type="PDB" id="8XM6">
    <property type="method" value="EM"/>
    <property type="resolution" value="3.48 A"/>
    <property type="chains" value="A/B=1-507"/>
</dbReference>
<dbReference type="PDB" id="8XMA">
    <property type="method" value="EM"/>
    <property type="resolution" value="2.65 A"/>
    <property type="chains" value="A/B=1-507"/>
</dbReference>
<dbReference type="PDB" id="8XMF">
    <property type="method" value="EM"/>
    <property type="resolution" value="3.64 A"/>
    <property type="chains" value="A/B=1-507"/>
</dbReference>
<dbReference type="PDB" id="8XMJ">
    <property type="method" value="EM"/>
    <property type="resolution" value="4.18 A"/>
    <property type="chains" value="A/B=1-507"/>
</dbReference>
<dbReference type="PDB" id="8ZB0">
    <property type="method" value="EM"/>
    <property type="resolution" value="3.70 A"/>
    <property type="chains" value="A/B=1-507"/>
</dbReference>
<dbReference type="PDB" id="8ZSB">
    <property type="method" value="EM"/>
    <property type="resolution" value="3.26 A"/>
    <property type="chains" value="A/B=1-507"/>
</dbReference>
<dbReference type="PDB" id="8ZSZ">
    <property type="method" value="EM"/>
    <property type="resolution" value="3.59 A"/>
    <property type="chains" value="A/B=1-507"/>
</dbReference>
<dbReference type="PDBsum" id="8J2G"/>
<dbReference type="PDBsum" id="8XM6"/>
<dbReference type="PDBsum" id="8XMA"/>
<dbReference type="PDBsum" id="8XMF"/>
<dbReference type="PDBsum" id="8XMJ"/>
<dbReference type="PDBsum" id="8ZB0"/>
<dbReference type="PDBsum" id="8ZSB"/>
<dbReference type="PDBsum" id="8ZSZ"/>
<dbReference type="EMDB" id="EMD-35949"/>
<dbReference type="EMDB" id="EMD-38465"/>
<dbReference type="EMDB" id="EMD-38469"/>
<dbReference type="EMDB" id="EMD-38475"/>
<dbReference type="EMDB" id="EMD-38479"/>
<dbReference type="EMDB" id="EMD-39893"/>
<dbReference type="EMDB" id="EMD-60410"/>
<dbReference type="EMDB" id="EMD-60435"/>
<dbReference type="SASBDB" id="Q9Y6M5"/>
<dbReference type="SMR" id="Q9Y6M5"/>
<dbReference type="BioGRID" id="113560">
    <property type="interactions" value="134"/>
</dbReference>
<dbReference type="ComplexPortal" id="CPX-8381">
    <property type="entry name" value="ZNT1 proton-coupled zinc antiporter homodimer"/>
</dbReference>
<dbReference type="ComplexPortal" id="CPX-8407">
    <property type="entry name" value="ZNT1-ZNT2 proton-coupled zinc antiporter complex"/>
</dbReference>
<dbReference type="ComplexPortal" id="CPX-8427">
    <property type="entry name" value="ZNT1-ZNT3 proton-coupled zinc antiporter complex"/>
</dbReference>
<dbReference type="ComplexPortal" id="CPX-8441">
    <property type="entry name" value="ZNT1-ZNT4 proton-coupled zinc antiporter complex"/>
</dbReference>
<dbReference type="FunCoup" id="Q9Y6M5">
    <property type="interactions" value="2076"/>
</dbReference>
<dbReference type="IntAct" id="Q9Y6M5">
    <property type="interactions" value="63"/>
</dbReference>
<dbReference type="MINT" id="Q9Y6M5"/>
<dbReference type="STRING" id="9606.ENSP00000355968"/>
<dbReference type="DrugBank" id="DB14533">
    <property type="generic name" value="Zinc chloride"/>
</dbReference>
<dbReference type="DrugBank" id="DB14548">
    <property type="generic name" value="Zinc sulfate, unspecified form"/>
</dbReference>
<dbReference type="TCDB" id="2.A.4.2.6">
    <property type="family name" value="the cation diffusion facilitator (cdf) family"/>
</dbReference>
<dbReference type="GlyCosmos" id="Q9Y6M5">
    <property type="glycosylation" value="1 site, No reported glycans"/>
</dbReference>
<dbReference type="GlyGen" id="Q9Y6M5">
    <property type="glycosylation" value="2 sites, 2 O-linked glycans (1 site)"/>
</dbReference>
<dbReference type="iPTMnet" id="Q9Y6M5"/>
<dbReference type="PhosphoSitePlus" id="Q9Y6M5"/>
<dbReference type="SwissPalm" id="Q9Y6M5"/>
<dbReference type="BioMuta" id="SLC30A1"/>
<dbReference type="DMDM" id="251757423"/>
<dbReference type="jPOST" id="Q9Y6M5"/>
<dbReference type="MassIVE" id="Q9Y6M5"/>
<dbReference type="PaxDb" id="9606-ENSP00000355968"/>
<dbReference type="PeptideAtlas" id="Q9Y6M5"/>
<dbReference type="ProteomicsDB" id="86733"/>
<dbReference type="Pumba" id="Q9Y6M5"/>
<dbReference type="Antibodypedia" id="20709">
    <property type="antibodies" value="230 antibodies from 27 providers"/>
</dbReference>
<dbReference type="DNASU" id="7779"/>
<dbReference type="Ensembl" id="ENST00000367001.5">
    <property type="protein sequence ID" value="ENSP00000355968.4"/>
    <property type="gene ID" value="ENSG00000170385.10"/>
</dbReference>
<dbReference type="GeneID" id="7779"/>
<dbReference type="KEGG" id="hsa:7779"/>
<dbReference type="MANE-Select" id="ENST00000367001.5">
    <property type="protein sequence ID" value="ENSP00000355968.4"/>
    <property type="RefSeq nucleotide sequence ID" value="NM_021194.3"/>
    <property type="RefSeq protein sequence ID" value="NP_067017.2"/>
</dbReference>
<dbReference type="UCSC" id="uc001hio.2">
    <property type="organism name" value="human"/>
</dbReference>
<dbReference type="AGR" id="HGNC:11012"/>
<dbReference type="CTD" id="7779"/>
<dbReference type="DisGeNET" id="7779"/>
<dbReference type="GeneCards" id="SLC30A1"/>
<dbReference type="HGNC" id="HGNC:11012">
    <property type="gene designation" value="SLC30A1"/>
</dbReference>
<dbReference type="HPA" id="ENSG00000170385">
    <property type="expression patterns" value="Tissue enhanced (liver)"/>
</dbReference>
<dbReference type="MIM" id="609521">
    <property type="type" value="gene"/>
</dbReference>
<dbReference type="neXtProt" id="NX_Q9Y6M5"/>
<dbReference type="OpenTargets" id="ENSG00000170385"/>
<dbReference type="PharmGKB" id="PA35882"/>
<dbReference type="VEuPathDB" id="HostDB:ENSG00000170385"/>
<dbReference type="eggNOG" id="KOG1483">
    <property type="taxonomic scope" value="Eukaryota"/>
</dbReference>
<dbReference type="GeneTree" id="ENSGT00940000156484"/>
<dbReference type="HOGENOM" id="CLU_013430_4_3_1"/>
<dbReference type="InParanoid" id="Q9Y6M5"/>
<dbReference type="OMA" id="CLFHQHG"/>
<dbReference type="OrthoDB" id="29444at2759"/>
<dbReference type="PAN-GO" id="Q9Y6M5">
    <property type="GO annotations" value="8 GO annotations based on evolutionary models"/>
</dbReference>
<dbReference type="PhylomeDB" id="Q9Y6M5"/>
<dbReference type="TreeFam" id="TF313924"/>
<dbReference type="PathwayCommons" id="Q9Y6M5"/>
<dbReference type="Reactome" id="R-HSA-435368">
    <property type="pathway name" value="Zinc efflux and compartmentalization by the SLC30 family"/>
</dbReference>
<dbReference type="SignaLink" id="Q9Y6M5"/>
<dbReference type="BioGRID-ORCS" id="7779">
    <property type="hits" value="39 hits in 1158 CRISPR screens"/>
</dbReference>
<dbReference type="GeneWiki" id="SLC30A1"/>
<dbReference type="GenomeRNAi" id="7779"/>
<dbReference type="Pharos" id="Q9Y6M5">
    <property type="development level" value="Tbio"/>
</dbReference>
<dbReference type="PRO" id="PR:Q9Y6M5"/>
<dbReference type="Proteomes" id="UP000005640">
    <property type="component" value="Chromosome 1"/>
</dbReference>
<dbReference type="RNAct" id="Q9Y6M5">
    <property type="molecule type" value="protein"/>
</dbReference>
<dbReference type="Bgee" id="ENSG00000170385">
    <property type="expression patterns" value="Expressed in jejunal mucosa and 206 other cell types or tissues"/>
</dbReference>
<dbReference type="GO" id="GO:0016323">
    <property type="term" value="C:basolateral plasma membrane"/>
    <property type="evidence" value="ECO:0000314"/>
    <property type="project" value="UniProtKB"/>
</dbReference>
<dbReference type="GO" id="GO:0005737">
    <property type="term" value="C:cytoplasm"/>
    <property type="evidence" value="ECO:0000314"/>
    <property type="project" value="UniProtKB"/>
</dbReference>
<dbReference type="GO" id="GO:0030659">
    <property type="term" value="C:cytoplasmic vesicle membrane"/>
    <property type="evidence" value="ECO:0000314"/>
    <property type="project" value="UniProtKB"/>
</dbReference>
<dbReference type="GO" id="GO:0030425">
    <property type="term" value="C:dendrite"/>
    <property type="evidence" value="ECO:0007669"/>
    <property type="project" value="Ensembl"/>
</dbReference>
<dbReference type="GO" id="GO:0005783">
    <property type="term" value="C:endoplasmic reticulum"/>
    <property type="evidence" value="ECO:0000314"/>
    <property type="project" value="UniProtKB"/>
</dbReference>
<dbReference type="GO" id="GO:0005789">
    <property type="term" value="C:endoplasmic reticulum membrane"/>
    <property type="evidence" value="ECO:0007669"/>
    <property type="project" value="UniProtKB-SubCell"/>
</dbReference>
<dbReference type="GO" id="GO:0099573">
    <property type="term" value="C:glutamatergic postsynaptic density"/>
    <property type="evidence" value="ECO:0007669"/>
    <property type="project" value="Ensembl"/>
</dbReference>
<dbReference type="GO" id="GO:0005794">
    <property type="term" value="C:Golgi apparatus"/>
    <property type="evidence" value="ECO:0000314"/>
    <property type="project" value="UniProtKB"/>
</dbReference>
<dbReference type="GO" id="GO:0000139">
    <property type="term" value="C:Golgi membrane"/>
    <property type="evidence" value="ECO:0007669"/>
    <property type="project" value="UniProtKB-SubCell"/>
</dbReference>
<dbReference type="GO" id="GO:0016020">
    <property type="term" value="C:membrane"/>
    <property type="evidence" value="ECO:0000318"/>
    <property type="project" value="GO_Central"/>
</dbReference>
<dbReference type="GO" id="GO:0031965">
    <property type="term" value="C:nuclear membrane"/>
    <property type="evidence" value="ECO:0000314"/>
    <property type="project" value="UniProtKB"/>
</dbReference>
<dbReference type="GO" id="GO:0005886">
    <property type="term" value="C:plasma membrane"/>
    <property type="evidence" value="ECO:0000314"/>
    <property type="project" value="UniProtKB"/>
</dbReference>
<dbReference type="GO" id="GO:0098839">
    <property type="term" value="C:postsynaptic density membrane"/>
    <property type="evidence" value="ECO:0007669"/>
    <property type="project" value="Ensembl"/>
</dbReference>
<dbReference type="GO" id="GO:0099092">
    <property type="term" value="C:postsynaptic density, intracellular component"/>
    <property type="evidence" value="ECO:0007669"/>
    <property type="project" value="Ensembl"/>
</dbReference>
<dbReference type="GO" id="GO:0098685">
    <property type="term" value="C:Schaffer collateral - CA1 synapse"/>
    <property type="evidence" value="ECO:0007669"/>
    <property type="project" value="Ensembl"/>
</dbReference>
<dbReference type="GO" id="GO:0030315">
    <property type="term" value="C:T-tubule"/>
    <property type="evidence" value="ECO:0000250"/>
    <property type="project" value="BHF-UCL"/>
</dbReference>
<dbReference type="GO" id="GO:0019855">
    <property type="term" value="F:calcium channel inhibitor activity"/>
    <property type="evidence" value="ECO:0000250"/>
    <property type="project" value="BHF-UCL"/>
</dbReference>
<dbReference type="GO" id="GO:0046872">
    <property type="term" value="F:metal ion binding"/>
    <property type="evidence" value="ECO:0007669"/>
    <property type="project" value="UniProtKB-KW"/>
</dbReference>
<dbReference type="GO" id="GO:0005385">
    <property type="term" value="F:zinc ion transmembrane transporter activity"/>
    <property type="evidence" value="ECO:0000250"/>
    <property type="project" value="BHF-UCL"/>
</dbReference>
<dbReference type="GO" id="GO:0140826">
    <property type="term" value="F:zinc:proton antiporter activity"/>
    <property type="evidence" value="ECO:0000250"/>
    <property type="project" value="UniProtKB"/>
</dbReference>
<dbReference type="GO" id="GO:0070574">
    <property type="term" value="P:cadmium ion transmembrane transport"/>
    <property type="evidence" value="ECO:0000250"/>
    <property type="project" value="BHF-UCL"/>
</dbReference>
<dbReference type="GO" id="GO:0070509">
    <property type="term" value="P:calcium ion import"/>
    <property type="evidence" value="ECO:0007669"/>
    <property type="project" value="Ensembl"/>
</dbReference>
<dbReference type="GO" id="GO:0042742">
    <property type="term" value="P:defense response to bacterium"/>
    <property type="evidence" value="ECO:0000314"/>
    <property type="project" value="UniProtKB"/>
</dbReference>
<dbReference type="GO" id="GO:0071585">
    <property type="term" value="P:detoxification of cadmium ion"/>
    <property type="evidence" value="ECO:0007669"/>
    <property type="project" value="Ensembl"/>
</dbReference>
<dbReference type="GO" id="GO:0010312">
    <property type="term" value="P:detoxification of zinc ion"/>
    <property type="evidence" value="ECO:0000318"/>
    <property type="project" value="GO_Central"/>
</dbReference>
<dbReference type="GO" id="GO:0001701">
    <property type="term" value="P:in utero embryonic development"/>
    <property type="evidence" value="ECO:0007669"/>
    <property type="project" value="Ensembl"/>
</dbReference>
<dbReference type="GO" id="GO:0006874">
    <property type="term" value="P:intracellular calcium ion homeostasis"/>
    <property type="evidence" value="ECO:0000250"/>
    <property type="project" value="BHF-UCL"/>
</dbReference>
<dbReference type="GO" id="GO:0006882">
    <property type="term" value="P:intracellular zinc ion homeostasis"/>
    <property type="evidence" value="ECO:0000314"/>
    <property type="project" value="UniProtKB"/>
</dbReference>
<dbReference type="GO" id="GO:0090281">
    <property type="term" value="P:negative regulation of calcium ion import"/>
    <property type="evidence" value="ECO:0000250"/>
    <property type="project" value="BHF-UCL"/>
</dbReference>
<dbReference type="GO" id="GO:0046929">
    <property type="term" value="P:negative regulation of neurotransmitter secretion"/>
    <property type="evidence" value="ECO:0000250"/>
    <property type="project" value="BHF-UCL"/>
</dbReference>
<dbReference type="GO" id="GO:0071584">
    <property type="term" value="P:negative regulation of zinc ion transmembrane import"/>
    <property type="evidence" value="ECO:0000250"/>
    <property type="project" value="BHF-UCL"/>
</dbReference>
<dbReference type="GO" id="GO:0061003">
    <property type="term" value="P:positive regulation of dendritic spine morphogenesis"/>
    <property type="evidence" value="ECO:0007669"/>
    <property type="project" value="Ensembl"/>
</dbReference>
<dbReference type="GO" id="GO:1902897">
    <property type="term" value="P:regulation of postsynaptic density protein 95 clustering"/>
    <property type="evidence" value="ECO:0007669"/>
    <property type="project" value="Ensembl"/>
</dbReference>
<dbReference type="GO" id="GO:0140882">
    <property type="term" value="P:zinc export across plasma membrane"/>
    <property type="evidence" value="ECO:0000250"/>
    <property type="project" value="UniProtKB"/>
</dbReference>
<dbReference type="GO" id="GO:0062111">
    <property type="term" value="P:zinc ion import into organelle"/>
    <property type="evidence" value="ECO:0000314"/>
    <property type="project" value="UniProtKB"/>
</dbReference>
<dbReference type="GO" id="GO:0071577">
    <property type="term" value="P:zinc ion transmembrane transport"/>
    <property type="evidence" value="ECO:0000318"/>
    <property type="project" value="GO_Central"/>
</dbReference>
<dbReference type="GO" id="GO:0006829">
    <property type="term" value="P:zinc ion transport"/>
    <property type="evidence" value="ECO:0000250"/>
    <property type="project" value="BHF-UCL"/>
</dbReference>
<dbReference type="Gene3D" id="1.20.1510.10">
    <property type="entry name" value="Cation efflux protein transmembrane domain"/>
    <property type="match status" value="1"/>
</dbReference>
<dbReference type="InterPro" id="IPR002524">
    <property type="entry name" value="Cation_efflux"/>
</dbReference>
<dbReference type="InterPro" id="IPR036837">
    <property type="entry name" value="Cation_efflux_CTD_sf"/>
</dbReference>
<dbReference type="InterPro" id="IPR027469">
    <property type="entry name" value="Cation_efflux_TMD_sf"/>
</dbReference>
<dbReference type="NCBIfam" id="TIGR01297">
    <property type="entry name" value="CDF"/>
    <property type="match status" value="1"/>
</dbReference>
<dbReference type="PANTHER" id="PTHR45820">
    <property type="entry name" value="FI23527P1"/>
    <property type="match status" value="1"/>
</dbReference>
<dbReference type="PANTHER" id="PTHR45820:SF1">
    <property type="entry name" value="PROTON-COUPLED ZINC ANTIPORTER SLC30A1"/>
    <property type="match status" value="1"/>
</dbReference>
<dbReference type="Pfam" id="PF01545">
    <property type="entry name" value="Cation_efflux"/>
    <property type="match status" value="1"/>
</dbReference>
<dbReference type="SUPFAM" id="SSF160240">
    <property type="entry name" value="Cation efflux protein cytoplasmic domain-like"/>
    <property type="match status" value="1"/>
</dbReference>
<dbReference type="SUPFAM" id="SSF161111">
    <property type="entry name" value="Cation efflux protein transmembrane domain-like"/>
    <property type="match status" value="1"/>
</dbReference>
<protein>
    <recommendedName>
        <fullName evidence="12">Proton-coupled zinc antiporter SLC30A1</fullName>
    </recommendedName>
    <alternativeName>
        <fullName evidence="13">Solute carrier family 30 member 1</fullName>
    </alternativeName>
    <alternativeName>
        <fullName evidence="9">Zinc transporter 1</fullName>
    </alternativeName>
</protein>
<name>ZNT1_HUMAN</name>